<feature type="chain" id="PRO_0000093996" description="RNA polymerase principal sigma factor HrdD">
    <location>
        <begin position="1"/>
        <end position="332"/>
    </location>
</feature>
<feature type="DNA-binding region" description="H-T-H motif" evidence="1">
    <location>
        <begin position="294"/>
        <end position="313"/>
    </location>
</feature>
<feature type="region of interest" description="Disordered" evidence="2">
    <location>
        <begin position="1"/>
        <end position="25"/>
    </location>
</feature>
<feature type="short sequence motif" description="Polymerase core binding">
    <location>
        <begin position="124"/>
        <end position="137"/>
    </location>
</feature>
<feature type="compositionally biased region" description="Polar residues" evidence="2">
    <location>
        <begin position="10"/>
        <end position="22"/>
    </location>
</feature>
<evidence type="ECO:0000250" key="1"/>
<evidence type="ECO:0000256" key="2">
    <source>
        <dbReference type="SAM" id="MobiDB-lite"/>
    </source>
</evidence>
<evidence type="ECO:0000305" key="3"/>
<comment type="function">
    <text>Sigma factors are initiation factors that promote the attachment of RNA polymerase to specific initiation sites and are then released.</text>
</comment>
<comment type="similarity">
    <text evidence="3">Belongs to the sigma-70 factor family.</text>
</comment>
<reference key="1">
    <citation type="submission" date="1996-06" db="EMBL/GenBank/DDBJ databases">
        <title>Nucleotide sequence of the hrdD gene from the valanimycin producer, Streptomyces viridifaciens MG456-hF10.</title>
        <authorList>
            <person name="Li W."/>
            <person name="Parry R.J."/>
        </authorList>
    </citation>
    <scope>NUCLEOTIDE SEQUENCE [GENOMIC DNA]</scope>
    <source>
        <strain>MG456-hF10</strain>
    </source>
</reference>
<protein>
    <recommendedName>
        <fullName>RNA polymerase principal sigma factor HrdD</fullName>
    </recommendedName>
</protein>
<sequence length="332" mass="37100">MATRAVARRQSATGETADSASSVRAHGGEIADRDLVGMYLDEIARTPLLDAAKEVELSQTIEAGVFAQQVLDGEEESRTDATREELQALVDAGERAKDVFIRSNLRLVVAVARRYPRSGLPLLDLIQEGNAGLVRAVEKFDYRKGFKFSTYATWWIRQAITRSIADQSRTIRLPVHLVEELGRIRRVQREFNREHGRDPEPAEVAAELGSTPERVIDVLDWARDPVSLNMAVDDAGETQFGDLLEDTSAVSPEQSVLTLLRSEELDDLIGRLDQRTASIIKMRYGIDDGRERTLTEVGKEHGLTRERIRQIEKHALLELKKLARDTGFDAAA</sequence>
<name>HRDD_STRVF</name>
<proteinExistence type="inferred from homology"/>
<dbReference type="EMBL" id="U60418">
    <property type="protein sequence ID" value="AAB03580.1"/>
    <property type="molecule type" value="Genomic_DNA"/>
</dbReference>
<dbReference type="SMR" id="Q60012"/>
<dbReference type="GO" id="GO:0003677">
    <property type="term" value="F:DNA binding"/>
    <property type="evidence" value="ECO:0007669"/>
    <property type="project" value="UniProtKB-KW"/>
</dbReference>
<dbReference type="GO" id="GO:0016987">
    <property type="term" value="F:sigma factor activity"/>
    <property type="evidence" value="ECO:0007669"/>
    <property type="project" value="UniProtKB-KW"/>
</dbReference>
<dbReference type="GO" id="GO:0006352">
    <property type="term" value="P:DNA-templated transcription initiation"/>
    <property type="evidence" value="ECO:0007669"/>
    <property type="project" value="InterPro"/>
</dbReference>
<dbReference type="FunFam" id="1.10.601.10:FF:000001">
    <property type="entry name" value="RNA polymerase sigma factor SigA"/>
    <property type="match status" value="1"/>
</dbReference>
<dbReference type="Gene3D" id="1.10.601.10">
    <property type="entry name" value="RNA Polymerase Primary Sigma Factor"/>
    <property type="match status" value="1"/>
</dbReference>
<dbReference type="Gene3D" id="1.10.10.10">
    <property type="entry name" value="Winged helix-like DNA-binding domain superfamily/Winged helix DNA-binding domain"/>
    <property type="match status" value="2"/>
</dbReference>
<dbReference type="InterPro" id="IPR014284">
    <property type="entry name" value="RNA_pol_sigma-70_dom"/>
</dbReference>
<dbReference type="InterPro" id="IPR000943">
    <property type="entry name" value="RNA_pol_sigma70"/>
</dbReference>
<dbReference type="InterPro" id="IPR009042">
    <property type="entry name" value="RNA_pol_sigma70_r1_2"/>
</dbReference>
<dbReference type="InterPro" id="IPR007627">
    <property type="entry name" value="RNA_pol_sigma70_r2"/>
</dbReference>
<dbReference type="InterPro" id="IPR007624">
    <property type="entry name" value="RNA_pol_sigma70_r3"/>
</dbReference>
<dbReference type="InterPro" id="IPR007630">
    <property type="entry name" value="RNA_pol_sigma70_r4"/>
</dbReference>
<dbReference type="InterPro" id="IPR013325">
    <property type="entry name" value="RNA_pol_sigma_r2"/>
</dbReference>
<dbReference type="InterPro" id="IPR013324">
    <property type="entry name" value="RNA_pol_sigma_r3/r4-like"/>
</dbReference>
<dbReference type="InterPro" id="IPR050239">
    <property type="entry name" value="Sigma-70_RNA_pol_init_factors"/>
</dbReference>
<dbReference type="InterPro" id="IPR036388">
    <property type="entry name" value="WH-like_DNA-bd_sf"/>
</dbReference>
<dbReference type="NCBIfam" id="TIGR02937">
    <property type="entry name" value="sigma70-ECF"/>
    <property type="match status" value="1"/>
</dbReference>
<dbReference type="PANTHER" id="PTHR30603:SF59">
    <property type="entry name" value="RNA POLYMERASE PRINCIPAL SIGMA FACTOR HRDA"/>
    <property type="match status" value="1"/>
</dbReference>
<dbReference type="PANTHER" id="PTHR30603">
    <property type="entry name" value="RNA POLYMERASE SIGMA FACTOR RPO"/>
    <property type="match status" value="1"/>
</dbReference>
<dbReference type="Pfam" id="PF00140">
    <property type="entry name" value="Sigma70_r1_2"/>
    <property type="match status" value="1"/>
</dbReference>
<dbReference type="Pfam" id="PF04542">
    <property type="entry name" value="Sigma70_r2"/>
    <property type="match status" value="1"/>
</dbReference>
<dbReference type="Pfam" id="PF04539">
    <property type="entry name" value="Sigma70_r3"/>
    <property type="match status" value="1"/>
</dbReference>
<dbReference type="Pfam" id="PF04545">
    <property type="entry name" value="Sigma70_r4"/>
    <property type="match status" value="1"/>
</dbReference>
<dbReference type="PRINTS" id="PR00046">
    <property type="entry name" value="SIGMA70FCT"/>
</dbReference>
<dbReference type="SUPFAM" id="SSF88946">
    <property type="entry name" value="Sigma2 domain of RNA polymerase sigma factors"/>
    <property type="match status" value="1"/>
</dbReference>
<dbReference type="SUPFAM" id="SSF88659">
    <property type="entry name" value="Sigma3 and sigma4 domains of RNA polymerase sigma factors"/>
    <property type="match status" value="2"/>
</dbReference>
<dbReference type="PROSITE" id="PS00715">
    <property type="entry name" value="SIGMA70_1"/>
    <property type="match status" value="1"/>
</dbReference>
<dbReference type="PROSITE" id="PS00716">
    <property type="entry name" value="SIGMA70_2"/>
    <property type="match status" value="1"/>
</dbReference>
<organism>
    <name type="scientific">Streptomyces viridifaciens</name>
    <dbReference type="NCBI Taxonomy" id="48665"/>
    <lineage>
        <taxon>Bacteria</taxon>
        <taxon>Bacillati</taxon>
        <taxon>Actinomycetota</taxon>
        <taxon>Actinomycetes</taxon>
        <taxon>Kitasatosporales</taxon>
        <taxon>Streptomycetaceae</taxon>
        <taxon>Streptomyces</taxon>
    </lineage>
</organism>
<gene>
    <name type="primary">hrdD</name>
</gene>
<keyword id="KW-0238">DNA-binding</keyword>
<keyword id="KW-0731">Sigma factor</keyword>
<keyword id="KW-0804">Transcription</keyword>
<keyword id="KW-0805">Transcription regulation</keyword>
<accession>Q60012</accession>